<comment type="function">
    <text evidence="1">A GTPase-activating protein (GAP) that modifies Der/EngA GTPase function. May play a role in ribosome biogenesis.</text>
</comment>
<comment type="subunit">
    <text evidence="1">Interacts with Der.</text>
</comment>
<comment type="similarity">
    <text evidence="1">Belongs to the YihI family.</text>
</comment>
<reference key="1">
    <citation type="journal article" date="2008" name="Environ. Microbiol.">
        <title>The genome of Erwinia tasmaniensis strain Et1/99, a non-pathogenic bacterium in the genus Erwinia.</title>
        <authorList>
            <person name="Kube M."/>
            <person name="Migdoll A.M."/>
            <person name="Mueller I."/>
            <person name="Kuhl H."/>
            <person name="Beck A."/>
            <person name="Reinhardt R."/>
            <person name="Geider K."/>
        </authorList>
    </citation>
    <scope>NUCLEOTIDE SEQUENCE [LARGE SCALE GENOMIC DNA]</scope>
    <source>
        <strain>DSM 17950 / CFBP 7177 / CIP 109463 / NCPPB 4357 / Et1/99</strain>
    </source>
</reference>
<keyword id="KW-0343">GTPase activation</keyword>
<keyword id="KW-1185">Reference proteome</keyword>
<keyword id="KW-0690">Ribosome biogenesis</keyword>
<evidence type="ECO:0000255" key="1">
    <source>
        <dbReference type="HAMAP-Rule" id="MF_01058"/>
    </source>
</evidence>
<evidence type="ECO:0000256" key="2">
    <source>
        <dbReference type="SAM" id="MobiDB-lite"/>
    </source>
</evidence>
<organism>
    <name type="scientific">Erwinia tasmaniensis (strain DSM 17950 / CFBP 7177 / CIP 109463 / NCPPB 4357 / Et1/99)</name>
    <dbReference type="NCBI Taxonomy" id="465817"/>
    <lineage>
        <taxon>Bacteria</taxon>
        <taxon>Pseudomonadati</taxon>
        <taxon>Pseudomonadota</taxon>
        <taxon>Gammaproteobacteria</taxon>
        <taxon>Enterobacterales</taxon>
        <taxon>Erwiniaceae</taxon>
        <taxon>Erwinia</taxon>
    </lineage>
</organism>
<feature type="chain" id="PRO_1000136387" description="Der GTPase-activating protein YihI">
    <location>
        <begin position="1"/>
        <end position="180"/>
    </location>
</feature>
<feature type="region of interest" description="Disordered" evidence="2">
    <location>
        <begin position="1"/>
        <end position="102"/>
    </location>
</feature>
<feature type="region of interest" description="Disordered" evidence="2">
    <location>
        <begin position="158"/>
        <end position="180"/>
    </location>
</feature>
<feature type="compositionally biased region" description="Polar residues" evidence="2">
    <location>
        <begin position="1"/>
        <end position="10"/>
    </location>
</feature>
<feature type="compositionally biased region" description="Basic and acidic residues" evidence="2">
    <location>
        <begin position="21"/>
        <end position="32"/>
    </location>
</feature>
<feature type="compositionally biased region" description="Polar residues" evidence="2">
    <location>
        <begin position="45"/>
        <end position="54"/>
    </location>
</feature>
<feature type="compositionally biased region" description="Basic and acidic residues" evidence="2">
    <location>
        <begin position="55"/>
        <end position="67"/>
    </location>
</feature>
<feature type="compositionally biased region" description="Low complexity" evidence="2">
    <location>
        <begin position="84"/>
        <end position="93"/>
    </location>
</feature>
<accession>B2VFA0</accession>
<sequence length="180" mass="20076">MKQPARTSQVKKPAARVKRKTREEINQEARDRKREKKHSGHASGSRANPATVSQKGDKSQSVKDPRIGSKKAIALGTDAPVRQPANPVKAAKPAVEKKPRLTPEEELAKLENDERLDALLDRLENGEALSAEDQAWLDQSLDRIDVLMEQLGIALDDDAEDEKAEEDMYRLLKGSHRTPE</sequence>
<gene>
    <name evidence="1" type="primary">yihI</name>
    <name type="ordered locus">ETA_00260</name>
</gene>
<proteinExistence type="inferred from homology"/>
<name>YIHI_ERWT9</name>
<dbReference type="EMBL" id="CU468135">
    <property type="protein sequence ID" value="CAO95072.1"/>
    <property type="molecule type" value="Genomic_DNA"/>
</dbReference>
<dbReference type="RefSeq" id="WP_012439806.1">
    <property type="nucleotide sequence ID" value="NC_010694.1"/>
</dbReference>
<dbReference type="SMR" id="B2VFA0"/>
<dbReference type="STRING" id="465817.ETA_00260"/>
<dbReference type="KEGG" id="eta:ETA_00260"/>
<dbReference type="eggNOG" id="COG3078">
    <property type="taxonomic scope" value="Bacteria"/>
</dbReference>
<dbReference type="HOGENOM" id="CLU_094104_2_0_6"/>
<dbReference type="OrthoDB" id="5677577at2"/>
<dbReference type="Proteomes" id="UP000001726">
    <property type="component" value="Chromosome"/>
</dbReference>
<dbReference type="GO" id="GO:0005096">
    <property type="term" value="F:GTPase activator activity"/>
    <property type="evidence" value="ECO:0007669"/>
    <property type="project" value="UniProtKB-KW"/>
</dbReference>
<dbReference type="GO" id="GO:0042254">
    <property type="term" value="P:ribosome biogenesis"/>
    <property type="evidence" value="ECO:0007669"/>
    <property type="project" value="UniProtKB-KW"/>
</dbReference>
<dbReference type="HAMAP" id="MF_01058">
    <property type="entry name" value="GAP_YihI"/>
    <property type="match status" value="1"/>
</dbReference>
<dbReference type="InterPro" id="IPR007336">
    <property type="entry name" value="YihI"/>
</dbReference>
<dbReference type="NCBIfam" id="NF003560">
    <property type="entry name" value="PRK05244.1-1"/>
    <property type="match status" value="1"/>
</dbReference>
<dbReference type="Pfam" id="PF04220">
    <property type="entry name" value="YihI"/>
    <property type="match status" value="1"/>
</dbReference>
<protein>
    <recommendedName>
        <fullName evidence="1">Der GTPase-activating protein YihI</fullName>
    </recommendedName>
</protein>